<comment type="function">
    <text evidence="1">Probable E3 ubiquitin-protein ligase which mediates ubiquitination and subsequent proteasomal degradation of target proteins.</text>
</comment>
<comment type="catalytic activity">
    <reaction>
        <text>S-ubiquitinyl-[E2 ubiquitin-conjugating enzyme]-L-cysteine + [acceptor protein]-L-lysine = [E2 ubiquitin-conjugating enzyme]-L-cysteine + N(6)-ubiquitinyl-[acceptor protein]-L-lysine.</text>
        <dbReference type="EC" id="2.3.2.26"/>
    </reaction>
</comment>
<comment type="pathway">
    <text>Protein modification; protein ubiquitination.</text>
</comment>
<comment type="tissue specificity">
    <text evidence="6">Widely expressed. Expressed in root, stem, cauline and rosette leaf, seedling and flower (at protein level).</text>
</comment>
<comment type="developmental stage">
    <text evidence="6">Constitutively expressed throughout development post-germination (at protein level).</text>
</comment>
<comment type="similarity">
    <text evidence="7">Belongs to the UPL family. TOM1/PTR1 subfamily.</text>
</comment>
<comment type="sequence caution" evidence="7">
    <conflict type="erroneous gene model prediction">
        <sequence resource="EMBL-CDS" id="AAC18812"/>
    </conflict>
    <text>Was originally thought to correspond to two different genes.</text>
</comment>
<comment type="sequence caution" evidence="7">
    <conflict type="erroneous gene model prediction">
        <sequence resource="EMBL-CDS" id="AAC18813"/>
    </conflict>
    <text>Was originally thought to correspond to two different genes.</text>
</comment>
<comment type="sequence caution" evidence="7">
    <conflict type="erroneous initiation">
        <sequence resource="EMBL-CDS" id="AAN72076"/>
    </conflict>
</comment>
<organism>
    <name type="scientific">Arabidopsis thaliana</name>
    <name type="common">Mouse-ear cress</name>
    <dbReference type="NCBI Taxonomy" id="3702"/>
    <lineage>
        <taxon>Eukaryota</taxon>
        <taxon>Viridiplantae</taxon>
        <taxon>Streptophyta</taxon>
        <taxon>Embryophyta</taxon>
        <taxon>Tracheophyta</taxon>
        <taxon>Spermatophyta</taxon>
        <taxon>Magnoliopsida</taxon>
        <taxon>eudicotyledons</taxon>
        <taxon>Gunneridae</taxon>
        <taxon>Pentapetalae</taxon>
        <taxon>rosids</taxon>
        <taxon>malvids</taxon>
        <taxon>Brassicales</taxon>
        <taxon>Brassicaceae</taxon>
        <taxon>Camelineae</taxon>
        <taxon>Arabidopsis</taxon>
    </lineage>
</organism>
<name>UPL2_ARATH</name>
<sequence>MKLRRRRASEVPTKISLFINSVTSVPLELIQEPLASFRWEFDKGDFHHWVDLFYHFDTFFEKHVKVRKDLRIEEEFDESDPPFPKDAVLQVLRVIRLVLENCTNKQFYTSYEQHLSLLLASTDADVVEACLQTLAAFLKRPTGKYSIRDASLNLKLFSLAQGWGGKEEGLGLTSCATEHSCDQLFLQLGCTLLFEFYASDESPSELPGGLQVIHVPDVSMRSESDLELLNKLVIDHNVPPSLRFALLTRLRFARAFSSLATRQQYTCIRLYAFIVLVQASGDTENVVSFFNGEPEFVNELVTLVSYEDTVPAKIRILCLQSLVALSQDRTRQPTVLTAVTSGGHRGLLSGLMQKAIDSVICNTSKWSLAFAEALLSLVTVLVSSSSGCSAMREAGLIPTLVPLIKDTDPQHLHLVSTAVHILEVFMDYSNPAAALFRDLGGLDDTIFRLKQEVSRTEDDVKEIVCCSGSNGPEDDTEQLPYSEALISYHRRLLLKALLRAISLGTYAPGNTNLYGSEESLLPECLCIIFRRAKDFGGGVFSLAATVMSDLIHKDPTCFNALDSAGLTSAFLDAISDEVICSAEAITCIPQCLDALCLNNSGLQAVKDRNALRCFVKIFSSPSYLKALTSDTPGSLSSGLDELLRHQSSLRTYGVDMFIEILNSILIIGSGMEATTSKSADVPTDAAPVPMEIDVDEKSLAVSDEAEPSSDTSPANIELFLPDCVCNVARLFETVLQNAEVCSLFVEKKGIDTVLQLFSLPLMPLSTSLGQSFSVAFKNFSPQHSAGLARILCSYLREHLKKTNNLLVSIEGTQLLKLESAVQTKILRSLSCLEGMLSLSNFLLKGSASVISELSAANADVLKELGITYKQTIWQMALCNDTKEDEKKSVDRASDNSVSASSSTAERESDEDSSNALAVRYTNPVSIRSSSSQSIWGGHREFLSVVRSGRGVHGHTRHAIARMRGGRTRRHLESFNFDSEIPADLPVTSSSHELKKKSTEVLIAEILNKLNCTLRFFFTSLVKGFTSANRRRIDGPSLSSASKTLGTALAKVFLEALNFQGYGAAAGPDTSLSLKCRYLGKVVDDITFLTFDTRRRVCFTAMVNSFYVHGTFKELLTTFEATSQLLWKVPFSIRASSTENEKSGERNLWSHSKWLVDTLQNYCRALDYFVNSTYLLSPTSQTQLLVQPASVDLSIGLFPVPREPETFVRNLQSQVLEVILPIWNHPMFPDCNPNFVASVTSLVTHIYSGVVDTRENRSGATQGTNQRALPLQPDEAIVGMIVEMGFSRSRAEDALRRVGTNSVEMAMDWLFTNPEDPVQEDDELAQALALSLGNSSETPKLEDTEKPVDVPQEEAEPKEPPVDEVIAASVKLFQSDDSIAFPLVDLFVTLCNRNKGEDRPKIVFYLIQQLKLVQLDFSKDTGALTMIPHILALVLSEDDNTREIAAQDGIVAVAIGILTDFNLKSESETDILAPKCISALLLVLSMMLQAQTRLSSEYVEGNQGGSLVLSDSPQDSTAALKDALSSDVAKGESNQALESMFGKSTGYLTMEESSKVLLIACGLIKQRVPAMIMQAVLQLCARLTKSHALAIQFLENGGLSSLFNLPKKCFFPGYDTVASVIVRHLVEDPQTLQIAMETEIRQTLSGKRHIGRVLPRTFLTTMAPVISRDPVVFMKAVASTCQLESSGGTDFVILTKEKEKPKVSGSEHGFSLNEPLGISENKLHDGSGKCSKSHRRVPTNFIQVIDQLIDIVLSFPGLKRQEGEAANLISMDVDEPTTKVKGKSKVGEPEKAELGSEKSEELARVTFILKLLSDIVLMYLHGTSVILRRDTEISQLRGSNLPDDSPGNGGLIYHVIHRLLPISLEKFVGPEEWKEKLSEKASWFLVVLCSRSNEGRKRIINELTRVLSVFASLGRSSSQSVLLPDKRVLAFANLVYSILTKNSSSSNFPGCGCSPDVAKSMIDGGTIQCLTSILNVIDLDHPDAPKLVTLILKSLETLTRAANAAEQLKSEVPNEQKNTDSDERHDSHGTSTSTEVDELNQNNSSLQQVTDAVDNGQEQPQVSSQSEGERGSSLTQAMLQEMRIEGDETILPEPIQMDFFREEIEGDQIEMSFHVEDRADDDVDDDMDDEGEDDEGDDEDADSVEDGAGVMSIAGTDVEDPEDTGLGDEYNDDMVDEDEEDEDEYNDDMVDEDEDDEDEYNDDMVDEDEDDFHETRVIEVRWREALDGLDHFQIVGRSGGGNGFIDDITAEPFEGVNVDDLFALRRSLGFERRRQTGRSSFDRSGSEVHGFQHPLFSRPSQTGNTASVSASAGSISRHSEAGSYDVAQFYMFDSPVLPFDQVPVDPFSDRLGGGGAPPPLTDYSVVGMDSSRRGVGDSRWTDVGHPQPSSLSASIAQLIEEHFITNLRASAPVDTVVERETNTTEVQEQQQPDVPPSVGSETVLGDGNEGGEQSEEHELLNNNEVMHPLPLNSTPNEIDRMEVGEGGGAPIEQVDREAVHLISSAQGQSDTSGIQNVSVTAIPPPVDDPDSNFQPSVDVDMSSDGAEGNQSVQPSPLDGDNNELSSMEATQDVRNDEQVDEGSLDGRAPEVNAIDPTFLEALPEDLRAEVLASQQAQSVQPPTYEPPSVDDIDPEFLAALPPEIQREVLAQQRAQRMLQQSQGQPVDMDNASIIATLPADLREEVLLTSSEAVLAALPPPLLAEAQMLRDRAMRHYQARSRVFGSSHRLNNRRNGLGYRLTGMERGVGVTIGQRDVSSSADGLKVKEIEGDPLVNADALKSLIRLLRLAQPLGKGLLQRLLLNLCAHSFTRANLVQLLLDMIRPEMETLPSELALTNPQRLYGCQLNVVYGRSQLLNGLPPLVFRRVLEVLTYLATNHSAVADMLFYFDSSLLSQLSSRKGKEKVTHETDSRDLEIPLVVFLKLLNRPQLLQSTSHLALVMGLLQVVVYTAASRIEGWSPSSGVPEKLENKPVGEEASSETQKDAESELSVARRKNCAELYNIFLQLPQSDLCNLCMLLGYEGLSDKIYSLAGEVLKKLAAVDVTHRKFFTKELSELASGLSSSTVRVLATLSTTQKMSQNTCSMAGASILRVLQVLSSLTSTIDDSNVGTDKETDQEEQNIMQGLKVALEPLWQELGQCISMTELQLDHTAATSNVNPGDHVLGISPTSSLSPGTQSLLPLIEAFFVLCEKIQTPSMLQQDATVTAGEVKESSTHGSSSKTIVDSQKKIDGSVTFSKFVEKHRRLLNSFVRQNPSLLEKSFSMMLKAPRLIDFDNKKAYFRSRIRHQHDQHISGPLRISVRRAYVLEDSYNQLRMRSPQDLKGRLNVQFQGEEGIDAGGLTREWYQLLSRVIFDKGALLFTTVGNDATFQPNPNSVYQTEHLSYFKFVGRMVAKALFDGQLLDVYFTRSFYKHILGVKVTYHDIEAVDPDYYKNLKWLLENDVSDILDLTFSMDADEEKHILYEKTEVTDYELKPGGRNIRVTEETKHEYVDLVADHILTSAIRPQINAFLEGLNELIPRELVSIFNDKELELLISGLPEIDFDDLKANTEYTSYTVGSPVIRWFWEVVKAFSKEDMARFLQFVTGTSKVPLEGFKALQGISGPQRLQIHKAYGSPERLPSAHTCFNQLDLPEYQSKEQVQERLLLAIHEANEGFGFA</sequence>
<reference key="1">
    <citation type="journal article" date="1999" name="Plant J.">
        <title>UPL1 and 2, two 405 kDa ubiquitin-protein ligases from Arabidopsis thaliana related to the HECT-domain protein family.</title>
        <authorList>
            <person name="Bates P.W."/>
            <person name="Vierstra R.D."/>
        </authorList>
    </citation>
    <scope>NUCLEOTIDE SEQUENCE [GENOMIC DNA]</scope>
    <scope>TISSUE SPECIFICITY</scope>
    <scope>DEVELOPMENTAL STAGE</scope>
    <source>
        <strain>cv. Columbia</strain>
    </source>
</reference>
<reference key="2">
    <citation type="journal article" date="2000" name="Nature">
        <title>Sequence and analysis of chromosome 1 of the plant Arabidopsis thaliana.</title>
        <authorList>
            <person name="Theologis A."/>
            <person name="Ecker J.R."/>
            <person name="Palm C.J."/>
            <person name="Federspiel N.A."/>
            <person name="Kaul S."/>
            <person name="White O."/>
            <person name="Alonso J."/>
            <person name="Altafi H."/>
            <person name="Araujo R."/>
            <person name="Bowman C.L."/>
            <person name="Brooks S.Y."/>
            <person name="Buehler E."/>
            <person name="Chan A."/>
            <person name="Chao Q."/>
            <person name="Chen H."/>
            <person name="Cheuk R.F."/>
            <person name="Chin C.W."/>
            <person name="Chung M.K."/>
            <person name="Conn L."/>
            <person name="Conway A.B."/>
            <person name="Conway A.R."/>
            <person name="Creasy T.H."/>
            <person name="Dewar K."/>
            <person name="Dunn P."/>
            <person name="Etgu P."/>
            <person name="Feldblyum T.V."/>
            <person name="Feng J.-D."/>
            <person name="Fong B."/>
            <person name="Fujii C.Y."/>
            <person name="Gill J.E."/>
            <person name="Goldsmith A.D."/>
            <person name="Haas B."/>
            <person name="Hansen N.F."/>
            <person name="Hughes B."/>
            <person name="Huizar L."/>
            <person name="Hunter J.L."/>
            <person name="Jenkins J."/>
            <person name="Johnson-Hopson C."/>
            <person name="Khan S."/>
            <person name="Khaykin E."/>
            <person name="Kim C.J."/>
            <person name="Koo H.L."/>
            <person name="Kremenetskaia I."/>
            <person name="Kurtz D.B."/>
            <person name="Kwan A."/>
            <person name="Lam B."/>
            <person name="Langin-Hooper S."/>
            <person name="Lee A."/>
            <person name="Lee J.M."/>
            <person name="Lenz C.A."/>
            <person name="Li J.H."/>
            <person name="Li Y.-P."/>
            <person name="Lin X."/>
            <person name="Liu S.X."/>
            <person name="Liu Z.A."/>
            <person name="Luros J.S."/>
            <person name="Maiti R."/>
            <person name="Marziali A."/>
            <person name="Militscher J."/>
            <person name="Miranda M."/>
            <person name="Nguyen M."/>
            <person name="Nierman W.C."/>
            <person name="Osborne B.I."/>
            <person name="Pai G."/>
            <person name="Peterson J."/>
            <person name="Pham P.K."/>
            <person name="Rizzo M."/>
            <person name="Rooney T."/>
            <person name="Rowley D."/>
            <person name="Sakano H."/>
            <person name="Salzberg S.L."/>
            <person name="Schwartz J.R."/>
            <person name="Shinn P."/>
            <person name="Southwick A.M."/>
            <person name="Sun H."/>
            <person name="Tallon L.J."/>
            <person name="Tambunga G."/>
            <person name="Toriumi M.J."/>
            <person name="Town C.D."/>
            <person name="Utterback T."/>
            <person name="Van Aken S."/>
            <person name="Vaysberg M."/>
            <person name="Vysotskaia V.S."/>
            <person name="Walker M."/>
            <person name="Wu D."/>
            <person name="Yu G."/>
            <person name="Fraser C.M."/>
            <person name="Venter J.C."/>
            <person name="Davis R.W."/>
        </authorList>
    </citation>
    <scope>NUCLEOTIDE SEQUENCE [LARGE SCALE GENOMIC DNA]</scope>
    <source>
        <strain>cv. Columbia</strain>
    </source>
</reference>
<reference key="3">
    <citation type="journal article" date="2017" name="Plant J.">
        <title>Araport11: a complete reannotation of the Arabidopsis thaliana reference genome.</title>
        <authorList>
            <person name="Cheng C.Y."/>
            <person name="Krishnakumar V."/>
            <person name="Chan A.P."/>
            <person name="Thibaud-Nissen F."/>
            <person name="Schobel S."/>
            <person name="Town C.D."/>
        </authorList>
    </citation>
    <scope>GENOME REANNOTATION</scope>
    <source>
        <strain>cv. Columbia</strain>
    </source>
</reference>
<reference key="4">
    <citation type="submission" date="2006-07" db="EMBL/GenBank/DDBJ databases">
        <title>Large-scale analysis of RIKEN Arabidopsis full-length (RAFL) cDNAs.</title>
        <authorList>
            <person name="Totoki Y."/>
            <person name="Seki M."/>
            <person name="Ishida J."/>
            <person name="Nakajima M."/>
            <person name="Enju A."/>
            <person name="Kamiya A."/>
            <person name="Narusaka M."/>
            <person name="Shin-i T."/>
            <person name="Nakagawa M."/>
            <person name="Sakamoto N."/>
            <person name="Oishi K."/>
            <person name="Kohara Y."/>
            <person name="Kobayashi M."/>
            <person name="Toyoda A."/>
            <person name="Sakaki Y."/>
            <person name="Sakurai T."/>
            <person name="Iida K."/>
            <person name="Akiyama K."/>
            <person name="Satou M."/>
            <person name="Toyoda T."/>
            <person name="Konagaya A."/>
            <person name="Carninci P."/>
            <person name="Kawai J."/>
            <person name="Hayashizaki Y."/>
            <person name="Shinozaki K."/>
        </authorList>
    </citation>
    <scope>NUCLEOTIDE SEQUENCE [LARGE SCALE MRNA] OF 2526-3658</scope>
    <source>
        <strain>cv. Columbia</strain>
    </source>
</reference>
<reference key="5">
    <citation type="journal article" date="2003" name="Science">
        <title>Empirical analysis of transcriptional activity in the Arabidopsis genome.</title>
        <authorList>
            <person name="Yamada K."/>
            <person name="Lim J."/>
            <person name="Dale J.M."/>
            <person name="Chen H."/>
            <person name="Shinn P."/>
            <person name="Palm C.J."/>
            <person name="Southwick A.M."/>
            <person name="Wu H.C."/>
            <person name="Kim C.J."/>
            <person name="Nguyen M."/>
            <person name="Pham P.K."/>
            <person name="Cheuk R.F."/>
            <person name="Karlin-Newmann G."/>
            <person name="Liu S.X."/>
            <person name="Lam B."/>
            <person name="Sakano H."/>
            <person name="Wu T."/>
            <person name="Yu G."/>
            <person name="Miranda M."/>
            <person name="Quach H.L."/>
            <person name="Tripp M."/>
            <person name="Chang C.H."/>
            <person name="Lee J.M."/>
            <person name="Toriumi M.J."/>
            <person name="Chan M.M."/>
            <person name="Tang C.C."/>
            <person name="Onodera C.S."/>
            <person name="Deng J.M."/>
            <person name="Akiyama K."/>
            <person name="Ansari Y."/>
            <person name="Arakawa T."/>
            <person name="Banh J."/>
            <person name="Banno F."/>
            <person name="Bowser L."/>
            <person name="Brooks S.Y."/>
            <person name="Carninci P."/>
            <person name="Chao Q."/>
            <person name="Choy N."/>
            <person name="Enju A."/>
            <person name="Goldsmith A.D."/>
            <person name="Gurjal M."/>
            <person name="Hansen N.F."/>
            <person name="Hayashizaki Y."/>
            <person name="Johnson-Hopson C."/>
            <person name="Hsuan V.W."/>
            <person name="Iida K."/>
            <person name="Karnes M."/>
            <person name="Khan S."/>
            <person name="Koesema E."/>
            <person name="Ishida J."/>
            <person name="Jiang P.X."/>
            <person name="Jones T."/>
            <person name="Kawai J."/>
            <person name="Kamiya A."/>
            <person name="Meyers C."/>
            <person name="Nakajima M."/>
            <person name="Narusaka M."/>
            <person name="Seki M."/>
            <person name="Sakurai T."/>
            <person name="Satou M."/>
            <person name="Tamse R."/>
            <person name="Vaysberg M."/>
            <person name="Wallender E.K."/>
            <person name="Wong C."/>
            <person name="Yamamura Y."/>
            <person name="Yuan S."/>
            <person name="Shinozaki K."/>
            <person name="Davis R.W."/>
            <person name="Theologis A."/>
            <person name="Ecker J.R."/>
        </authorList>
    </citation>
    <scope>NUCLEOTIDE SEQUENCE [LARGE SCALE MRNA] OF 3298-3658</scope>
    <source>
        <strain>cv. Columbia</strain>
    </source>
</reference>
<reference key="6">
    <citation type="journal article" date="2003" name="Plant J.">
        <title>The HECT ubiquitin-protein ligase (UPL) family in Arabidopsis: UPL3 has a specific role in trichome development.</title>
        <authorList>
            <person name="Downes B.P."/>
            <person name="Stupar R.M."/>
            <person name="Gingerich D.J."/>
            <person name="Vierstra R.D."/>
        </authorList>
    </citation>
    <scope>GENE FAMILY ORGANIZATION</scope>
</reference>
<reference key="7">
    <citation type="journal article" date="2008" name="J. Proteome Res.">
        <title>Site-specific phosphorylation profiling of Arabidopsis proteins by mass spectrometry and peptide chip analysis.</title>
        <authorList>
            <person name="de la Fuente van Bentem S."/>
            <person name="Anrather D."/>
            <person name="Dohnal I."/>
            <person name="Roitinger E."/>
            <person name="Csaszar E."/>
            <person name="Joore J."/>
            <person name="Buijnink J."/>
            <person name="Carreri A."/>
            <person name="Forzani C."/>
            <person name="Lorkovic Z.J."/>
            <person name="Barta A."/>
            <person name="Lecourieux D."/>
            <person name="Verhounig A."/>
            <person name="Jonak C."/>
            <person name="Hirt H."/>
        </authorList>
    </citation>
    <scope>PHOSPHORYLATION [LARGE SCALE ANALYSIS] AT SER-2582</scope>
    <scope>IDENTIFICATION BY MASS SPECTROMETRY [LARGE SCALE ANALYSIS]</scope>
    <source>
        <tissue>Root</tissue>
    </source>
</reference>
<reference key="8">
    <citation type="journal article" date="2009" name="Plant Physiol.">
        <title>Large-scale Arabidopsis phosphoproteome profiling reveals novel chloroplast kinase substrates and phosphorylation networks.</title>
        <authorList>
            <person name="Reiland S."/>
            <person name="Messerli G."/>
            <person name="Baerenfaller K."/>
            <person name="Gerrits B."/>
            <person name="Endler A."/>
            <person name="Grossmann J."/>
            <person name="Gruissem W."/>
            <person name="Baginsky S."/>
        </authorList>
    </citation>
    <scope>PHOSPHORYLATION [LARGE SCALE ANALYSIS] AT SER-2582</scope>
    <scope>IDENTIFICATION BY MASS SPECTROMETRY [LARGE SCALE ANALYSIS]</scope>
</reference>
<evidence type="ECO:0000250" key="1"/>
<evidence type="ECO:0000255" key="2">
    <source>
        <dbReference type="PROSITE-ProRule" id="PRU00104"/>
    </source>
</evidence>
<evidence type="ECO:0000255" key="3">
    <source>
        <dbReference type="PROSITE-ProRule" id="PRU00212"/>
    </source>
</evidence>
<evidence type="ECO:0000255" key="4">
    <source>
        <dbReference type="PROSITE-ProRule" id="PRU00213"/>
    </source>
</evidence>
<evidence type="ECO:0000256" key="5">
    <source>
        <dbReference type="SAM" id="MobiDB-lite"/>
    </source>
</evidence>
<evidence type="ECO:0000269" key="6">
    <source>
    </source>
</evidence>
<evidence type="ECO:0000305" key="7"/>
<evidence type="ECO:0007744" key="8">
    <source>
    </source>
</evidence>
<evidence type="ECO:0007744" key="9">
    <source>
    </source>
</evidence>
<feature type="chain" id="PRO_0000120344" description="E3 ubiquitin-protein ligase UPL2">
    <location>
        <begin position="1"/>
        <end position="3658"/>
    </location>
</feature>
<feature type="domain" description="UBA" evidence="3">
    <location>
        <begin position="1271"/>
        <end position="1312"/>
    </location>
</feature>
<feature type="domain" description="UIM" evidence="4">
    <location>
        <begin position="1318"/>
        <end position="1337"/>
    </location>
</feature>
<feature type="domain" description="HECT" evidence="2">
    <location>
        <begin position="3317"/>
        <end position="3658"/>
    </location>
</feature>
<feature type="region of interest" description="Disordered" evidence="5">
    <location>
        <begin position="884"/>
        <end position="914"/>
    </location>
</feature>
<feature type="region of interest" description="Disordered" evidence="5">
    <location>
        <begin position="1331"/>
        <end position="1360"/>
    </location>
</feature>
<feature type="region of interest" description="Disordered" evidence="5">
    <location>
        <begin position="1702"/>
        <end position="1733"/>
    </location>
</feature>
<feature type="region of interest" description="Disordered" evidence="5">
    <location>
        <begin position="2004"/>
        <end position="2038"/>
    </location>
</feature>
<feature type="region of interest" description="Disordered" evidence="5">
    <location>
        <begin position="2052"/>
        <end position="2072"/>
    </location>
</feature>
<feature type="region of interest" description="Disordered" evidence="5">
    <location>
        <begin position="2113"/>
        <end position="2204"/>
    </location>
</feature>
<feature type="region of interest" description="Disordered" evidence="5">
    <location>
        <begin position="2293"/>
        <end position="2313"/>
    </location>
</feature>
<feature type="region of interest" description="Disordered" evidence="5">
    <location>
        <begin position="2417"/>
        <end position="2487"/>
    </location>
</feature>
<feature type="region of interest" description="Disordered" evidence="5">
    <location>
        <begin position="2503"/>
        <end position="2591"/>
    </location>
</feature>
<feature type="region of interest" description="Disordered" evidence="5">
    <location>
        <begin position="2958"/>
        <end position="2987"/>
    </location>
</feature>
<feature type="compositionally biased region" description="Basic and acidic residues" evidence="5">
    <location>
        <begin position="884"/>
        <end position="893"/>
    </location>
</feature>
<feature type="compositionally biased region" description="Low complexity" evidence="5">
    <location>
        <begin position="894"/>
        <end position="903"/>
    </location>
</feature>
<feature type="compositionally biased region" description="Basic and acidic residues" evidence="5">
    <location>
        <begin position="1338"/>
        <end position="1347"/>
    </location>
</feature>
<feature type="compositionally biased region" description="Basic and acidic residues" evidence="5">
    <location>
        <begin position="2007"/>
        <end position="2027"/>
    </location>
</feature>
<feature type="compositionally biased region" description="Polar residues" evidence="5">
    <location>
        <begin position="2028"/>
        <end position="2038"/>
    </location>
</feature>
<feature type="compositionally biased region" description="Acidic residues" evidence="5">
    <location>
        <begin position="2117"/>
        <end position="2144"/>
    </location>
</feature>
<feature type="compositionally biased region" description="Acidic residues" evidence="5">
    <location>
        <begin position="2156"/>
        <end position="2204"/>
    </location>
</feature>
<feature type="compositionally biased region" description="Polar residues" evidence="5">
    <location>
        <begin position="2297"/>
        <end position="2313"/>
    </location>
</feature>
<feature type="compositionally biased region" description="Low complexity" evidence="5">
    <location>
        <begin position="2422"/>
        <end position="2431"/>
    </location>
</feature>
<feature type="compositionally biased region" description="Polar residues" evidence="5">
    <location>
        <begin position="2503"/>
        <end position="2518"/>
    </location>
</feature>
<feature type="active site" description="Glycyl thioester intermediate" evidence="2">
    <location>
        <position position="3625"/>
    </location>
</feature>
<feature type="modified residue" description="Phosphoserine" evidence="8 9">
    <location>
        <position position="2582"/>
    </location>
</feature>
<feature type="sequence conflict" description="In Ref. 1; AAF36455." evidence="7" ref="1">
    <original>NL</original>
    <variation>ES</variation>
    <location>
        <begin position="153"/>
        <end position="154"/>
    </location>
</feature>
<feature type="sequence conflict" description="In Ref. 1; AAF36455." evidence="7" ref="1">
    <original>Q</original>
    <variation>R</variation>
    <location>
        <position position="263"/>
    </location>
</feature>
<feature type="sequence conflict" description="In Ref. 1; AAF36455." evidence="7" ref="1">
    <original>R</original>
    <variation>S</variation>
    <location>
        <position position="1759"/>
    </location>
</feature>
<feature type="sequence conflict" description="In Ref. 1; AAF36455." evidence="7" ref="1">
    <original>D</original>
    <variation>N</variation>
    <location>
        <position position="1771"/>
    </location>
</feature>
<feature type="sequence conflict" description="In Ref. 1; AAF36455." evidence="7" ref="1">
    <original>S</original>
    <variation>I</variation>
    <location>
        <position position="2322"/>
    </location>
</feature>
<feature type="sequence conflict" description="In Ref. 5; AAN72076." evidence="7" ref="5">
    <original>I</original>
    <variation>F</variation>
    <location>
        <position position="3298"/>
    </location>
</feature>
<keyword id="KW-0597">Phosphoprotein</keyword>
<keyword id="KW-1185">Reference proteome</keyword>
<keyword id="KW-0808">Transferase</keyword>
<keyword id="KW-0833">Ubl conjugation pathway</keyword>
<gene>
    <name type="primary">UPL2</name>
    <name type="ordered locus">At1g70320</name>
    <name type="ORF">F17O7.14/F17O7.15</name>
</gene>
<accession>Q8H0T4</accession>
<accession>O64604</accession>
<accession>O64605</accession>
<accession>Q0WL35</accession>
<accession>Q9M7K6</accession>
<protein>
    <recommendedName>
        <fullName>E3 ubiquitin-protein ligase UPL2</fullName>
        <shortName>Ubiquitin-protein ligase 2</shortName>
        <ecNumber>2.3.2.26</ecNumber>
    </recommendedName>
    <alternativeName>
        <fullName>HECT-type E3 ubiquitin transferase UPL2</fullName>
    </alternativeName>
</protein>
<proteinExistence type="evidence at protein level"/>
<dbReference type="EC" id="2.3.2.26"/>
<dbReference type="EMBL" id="AF127565">
    <property type="protein sequence ID" value="AAF36455.1"/>
    <property type="molecule type" value="Genomic_DNA"/>
</dbReference>
<dbReference type="EMBL" id="AC003671">
    <property type="protein sequence ID" value="AAC18812.1"/>
    <property type="status" value="ALT_SEQ"/>
    <property type="molecule type" value="Genomic_DNA"/>
</dbReference>
<dbReference type="EMBL" id="AC003671">
    <property type="protein sequence ID" value="AAC18813.1"/>
    <property type="status" value="ALT_SEQ"/>
    <property type="molecule type" value="Genomic_DNA"/>
</dbReference>
<dbReference type="EMBL" id="CP002684">
    <property type="protein sequence ID" value="AEE35045.1"/>
    <property type="molecule type" value="Genomic_DNA"/>
</dbReference>
<dbReference type="EMBL" id="AK230373">
    <property type="protein sequence ID" value="BAF02172.1"/>
    <property type="molecule type" value="mRNA"/>
</dbReference>
<dbReference type="EMBL" id="BT002065">
    <property type="protein sequence ID" value="AAN72076.1"/>
    <property type="status" value="ALT_INIT"/>
    <property type="molecule type" value="mRNA"/>
</dbReference>
<dbReference type="EMBL" id="BT008830">
    <property type="protein sequence ID" value="AAP68269.1"/>
    <property type="molecule type" value="mRNA"/>
</dbReference>
<dbReference type="PIR" id="T01490">
    <property type="entry name" value="T01490"/>
</dbReference>
<dbReference type="PIR" id="T01491">
    <property type="entry name" value="T01491"/>
</dbReference>
<dbReference type="RefSeq" id="NP_177189.1">
    <property type="nucleotide sequence ID" value="NM_105700.3"/>
</dbReference>
<dbReference type="SMR" id="Q8H0T4"/>
<dbReference type="BioGRID" id="28588">
    <property type="interactions" value="5"/>
</dbReference>
<dbReference type="FunCoup" id="Q8H0T4">
    <property type="interactions" value="4158"/>
</dbReference>
<dbReference type="IntAct" id="Q8H0T4">
    <property type="interactions" value="3"/>
</dbReference>
<dbReference type="STRING" id="3702.Q8H0T4"/>
<dbReference type="GlyGen" id="Q8H0T4">
    <property type="glycosylation" value="1 site"/>
</dbReference>
<dbReference type="iPTMnet" id="Q8H0T4"/>
<dbReference type="PaxDb" id="3702-AT1G70320.1"/>
<dbReference type="ProteomicsDB" id="234117"/>
<dbReference type="EnsemblPlants" id="AT1G70320.1">
    <property type="protein sequence ID" value="AT1G70320.1"/>
    <property type="gene ID" value="AT1G70320"/>
</dbReference>
<dbReference type="GeneID" id="843368"/>
<dbReference type="Gramene" id="AT1G70320.1">
    <property type="protein sequence ID" value="AT1G70320.1"/>
    <property type="gene ID" value="AT1G70320"/>
</dbReference>
<dbReference type="KEGG" id="ath:AT1G70320"/>
<dbReference type="Araport" id="AT1G70320"/>
<dbReference type="TAIR" id="AT1G70320">
    <property type="gene designation" value="UPL2"/>
</dbReference>
<dbReference type="eggNOG" id="KOG0939">
    <property type="taxonomic scope" value="Eukaryota"/>
</dbReference>
<dbReference type="HOGENOM" id="CLU_000215_1_0_1"/>
<dbReference type="InParanoid" id="Q8H0T4"/>
<dbReference type="OMA" id="NSEEWRE"/>
<dbReference type="UniPathway" id="UPA00143"/>
<dbReference type="CD-CODE" id="4299E36E">
    <property type="entry name" value="Nucleolus"/>
</dbReference>
<dbReference type="PRO" id="PR:Q8H0T4"/>
<dbReference type="Proteomes" id="UP000006548">
    <property type="component" value="Chromosome 1"/>
</dbReference>
<dbReference type="ExpressionAtlas" id="Q8H0T4">
    <property type="expression patterns" value="baseline and differential"/>
</dbReference>
<dbReference type="GO" id="GO:0005829">
    <property type="term" value="C:cytosol"/>
    <property type="evidence" value="ECO:0007005"/>
    <property type="project" value="TAIR"/>
</dbReference>
<dbReference type="GO" id="GO:0005739">
    <property type="term" value="C:mitochondrion"/>
    <property type="evidence" value="ECO:0007005"/>
    <property type="project" value="TAIR"/>
</dbReference>
<dbReference type="GO" id="GO:0004842">
    <property type="term" value="F:ubiquitin-protein transferase activity"/>
    <property type="evidence" value="ECO:0007669"/>
    <property type="project" value="InterPro"/>
</dbReference>
<dbReference type="GO" id="GO:0016567">
    <property type="term" value="P:protein ubiquitination"/>
    <property type="evidence" value="ECO:0007669"/>
    <property type="project" value="UniProtKB-UniPathway"/>
</dbReference>
<dbReference type="CDD" id="cd00078">
    <property type="entry name" value="HECTc"/>
    <property type="match status" value="1"/>
</dbReference>
<dbReference type="CDD" id="cd14327">
    <property type="entry name" value="UBA_atUPL1_2_like"/>
    <property type="match status" value="1"/>
</dbReference>
<dbReference type="FunFam" id="3.90.1750.10:FF:000026">
    <property type="entry name" value="E3 ubiquitin-protein ligase HACE1"/>
    <property type="match status" value="1"/>
</dbReference>
<dbReference type="FunFam" id="3.30.2160.10:FF:000001">
    <property type="entry name" value="E3 ubiquitin-protein ligase NEDD4-like"/>
    <property type="match status" value="1"/>
</dbReference>
<dbReference type="FunFam" id="1.25.10.10:FF:001075">
    <property type="entry name" value="E3 ubiquitin-protein ligase UPL1"/>
    <property type="match status" value="1"/>
</dbReference>
<dbReference type="FunFam" id="3.30.2410.10:FF:000010">
    <property type="entry name" value="E3 ubiquitin-protein ligase UPL1"/>
    <property type="match status" value="1"/>
</dbReference>
<dbReference type="FunFam" id="3.90.1750.10:FF:000003">
    <property type="entry name" value="E3 ubiquitin-protein ligase UPL1"/>
    <property type="match status" value="1"/>
</dbReference>
<dbReference type="Gene3D" id="6.10.250.1630">
    <property type="match status" value="1"/>
</dbReference>
<dbReference type="Gene3D" id="1.10.8.10">
    <property type="entry name" value="DNA helicase RuvA subunit, C-terminal domain"/>
    <property type="match status" value="1"/>
</dbReference>
<dbReference type="Gene3D" id="3.30.2160.10">
    <property type="entry name" value="Hect, E3 ligase catalytic domain"/>
    <property type="match status" value="1"/>
</dbReference>
<dbReference type="Gene3D" id="3.30.2410.10">
    <property type="entry name" value="Hect, E3 ligase catalytic domain"/>
    <property type="match status" value="1"/>
</dbReference>
<dbReference type="Gene3D" id="3.90.1750.10">
    <property type="entry name" value="Hect, E3 ligase catalytic domains"/>
    <property type="match status" value="1"/>
</dbReference>
<dbReference type="Gene3D" id="1.25.10.10">
    <property type="entry name" value="Leucine-rich Repeat Variant"/>
    <property type="match status" value="1"/>
</dbReference>
<dbReference type="InterPro" id="IPR011989">
    <property type="entry name" value="ARM-like"/>
</dbReference>
<dbReference type="InterPro" id="IPR016024">
    <property type="entry name" value="ARM-type_fold"/>
</dbReference>
<dbReference type="InterPro" id="IPR010309">
    <property type="entry name" value="E3_Ub_ligase_DUF908"/>
</dbReference>
<dbReference type="InterPro" id="IPR010314">
    <property type="entry name" value="E3_Ub_ligase_DUF913"/>
</dbReference>
<dbReference type="InterPro" id="IPR050409">
    <property type="entry name" value="E3_ubiq-protein_ligase"/>
</dbReference>
<dbReference type="InterPro" id="IPR000569">
    <property type="entry name" value="HECT_dom"/>
</dbReference>
<dbReference type="InterPro" id="IPR035983">
    <property type="entry name" value="Hect_E3_ubiquitin_ligase"/>
</dbReference>
<dbReference type="InterPro" id="IPR025527">
    <property type="entry name" value="HUWE1/Rev1_UBM"/>
</dbReference>
<dbReference type="InterPro" id="IPR015940">
    <property type="entry name" value="UBA"/>
</dbReference>
<dbReference type="InterPro" id="IPR009060">
    <property type="entry name" value="UBA-like_sf"/>
</dbReference>
<dbReference type="InterPro" id="IPR003903">
    <property type="entry name" value="UIM_dom"/>
</dbReference>
<dbReference type="PANTHER" id="PTHR11254:SF67">
    <property type="entry name" value="E3 UBIQUITIN-PROTEIN LIGASE HUWE1"/>
    <property type="match status" value="1"/>
</dbReference>
<dbReference type="PANTHER" id="PTHR11254">
    <property type="entry name" value="HECT DOMAIN UBIQUITIN-PROTEIN LIGASE"/>
    <property type="match status" value="1"/>
</dbReference>
<dbReference type="Pfam" id="PF06012">
    <property type="entry name" value="DUF908"/>
    <property type="match status" value="2"/>
</dbReference>
<dbReference type="Pfam" id="PF06025">
    <property type="entry name" value="DUF913"/>
    <property type="match status" value="1"/>
</dbReference>
<dbReference type="Pfam" id="PF00632">
    <property type="entry name" value="HECT"/>
    <property type="match status" value="1"/>
</dbReference>
<dbReference type="Pfam" id="PF22562">
    <property type="entry name" value="UBA_7"/>
    <property type="match status" value="1"/>
</dbReference>
<dbReference type="Pfam" id="PF14377">
    <property type="entry name" value="UBM"/>
    <property type="match status" value="3"/>
</dbReference>
<dbReference type="SMART" id="SM00119">
    <property type="entry name" value="HECTc"/>
    <property type="match status" value="1"/>
</dbReference>
<dbReference type="SMART" id="SM00165">
    <property type="entry name" value="UBA"/>
    <property type="match status" value="1"/>
</dbReference>
<dbReference type="SUPFAM" id="SSF48371">
    <property type="entry name" value="ARM repeat"/>
    <property type="match status" value="1"/>
</dbReference>
<dbReference type="SUPFAM" id="SSF56204">
    <property type="entry name" value="Hect, E3 ligase catalytic domain"/>
    <property type="match status" value="1"/>
</dbReference>
<dbReference type="SUPFAM" id="SSF46934">
    <property type="entry name" value="UBA-like"/>
    <property type="match status" value="1"/>
</dbReference>
<dbReference type="PROSITE" id="PS50237">
    <property type="entry name" value="HECT"/>
    <property type="match status" value="1"/>
</dbReference>
<dbReference type="PROSITE" id="PS50030">
    <property type="entry name" value="UBA"/>
    <property type="match status" value="1"/>
</dbReference>
<dbReference type="PROSITE" id="PS50330">
    <property type="entry name" value="UIM"/>
    <property type="match status" value="1"/>
</dbReference>